<gene>
    <name evidence="1" type="primary">sstT</name>
    <name type="ordered locus">Cla_1052</name>
</gene>
<proteinExistence type="inferred from homology"/>
<evidence type="ECO:0000255" key="1">
    <source>
        <dbReference type="HAMAP-Rule" id="MF_01582"/>
    </source>
</evidence>
<organism>
    <name type="scientific">Campylobacter lari (strain RM2100 / D67 / ATCC BAA-1060)</name>
    <dbReference type="NCBI Taxonomy" id="306263"/>
    <lineage>
        <taxon>Bacteria</taxon>
        <taxon>Pseudomonadati</taxon>
        <taxon>Campylobacterota</taxon>
        <taxon>Epsilonproteobacteria</taxon>
        <taxon>Campylobacterales</taxon>
        <taxon>Campylobacteraceae</taxon>
        <taxon>Campylobacter</taxon>
    </lineage>
</organism>
<dbReference type="EMBL" id="CP000932">
    <property type="protein sequence ID" value="ACM64374.1"/>
    <property type="molecule type" value="Genomic_DNA"/>
</dbReference>
<dbReference type="RefSeq" id="WP_012661757.1">
    <property type="nucleotide sequence ID" value="NC_012039.1"/>
</dbReference>
<dbReference type="SMR" id="B9KCT5"/>
<dbReference type="STRING" id="306263.Cla_1052"/>
<dbReference type="KEGG" id="cla:CLA_1052"/>
<dbReference type="PATRIC" id="fig|306263.5.peg.1036"/>
<dbReference type="eggNOG" id="COG3633">
    <property type="taxonomic scope" value="Bacteria"/>
</dbReference>
<dbReference type="HOGENOM" id="CLU_044581_0_0_7"/>
<dbReference type="Proteomes" id="UP000007727">
    <property type="component" value="Chromosome"/>
</dbReference>
<dbReference type="GO" id="GO:0005886">
    <property type="term" value="C:plasma membrane"/>
    <property type="evidence" value="ECO:0007669"/>
    <property type="project" value="UniProtKB-SubCell"/>
</dbReference>
<dbReference type="GO" id="GO:0005295">
    <property type="term" value="F:neutral L-amino acid:sodium symporter activity"/>
    <property type="evidence" value="ECO:0007669"/>
    <property type="project" value="TreeGrafter"/>
</dbReference>
<dbReference type="GO" id="GO:0032329">
    <property type="term" value="P:serine transport"/>
    <property type="evidence" value="ECO:0007669"/>
    <property type="project" value="InterPro"/>
</dbReference>
<dbReference type="GO" id="GO:0015826">
    <property type="term" value="P:threonine transport"/>
    <property type="evidence" value="ECO:0007669"/>
    <property type="project" value="InterPro"/>
</dbReference>
<dbReference type="FunFam" id="1.10.3860.10:FF:000003">
    <property type="entry name" value="Serine/threonine transporter sstT"/>
    <property type="match status" value="1"/>
</dbReference>
<dbReference type="Gene3D" id="1.10.3860.10">
    <property type="entry name" value="Sodium:dicarboxylate symporter"/>
    <property type="match status" value="1"/>
</dbReference>
<dbReference type="HAMAP" id="MF_01582">
    <property type="entry name" value="Ser_Thr_transp_SstT"/>
    <property type="match status" value="1"/>
</dbReference>
<dbReference type="InterPro" id="IPR001991">
    <property type="entry name" value="Na-dicarboxylate_symporter"/>
</dbReference>
<dbReference type="InterPro" id="IPR036458">
    <property type="entry name" value="Na:dicarbo_symporter_sf"/>
</dbReference>
<dbReference type="InterPro" id="IPR023025">
    <property type="entry name" value="Ser_Thr_transp_SstT"/>
</dbReference>
<dbReference type="NCBIfam" id="NF010151">
    <property type="entry name" value="PRK13628.1"/>
    <property type="match status" value="1"/>
</dbReference>
<dbReference type="PANTHER" id="PTHR42865">
    <property type="entry name" value="PROTON/GLUTAMATE-ASPARTATE SYMPORTER"/>
    <property type="match status" value="1"/>
</dbReference>
<dbReference type="PANTHER" id="PTHR42865:SF8">
    <property type="entry name" value="SERINE_THREONINE TRANSPORTER SSTT"/>
    <property type="match status" value="1"/>
</dbReference>
<dbReference type="Pfam" id="PF00375">
    <property type="entry name" value="SDF"/>
    <property type="match status" value="1"/>
</dbReference>
<dbReference type="PRINTS" id="PR00173">
    <property type="entry name" value="EDTRNSPORT"/>
</dbReference>
<dbReference type="SUPFAM" id="SSF118215">
    <property type="entry name" value="Proton glutamate symport protein"/>
    <property type="match status" value="1"/>
</dbReference>
<feature type="chain" id="PRO_1000185652" description="Serine/threonine transporter SstT">
    <location>
        <begin position="1"/>
        <end position="408"/>
    </location>
</feature>
<feature type="transmembrane region" description="Helical" evidence="1">
    <location>
        <begin position="14"/>
        <end position="34"/>
    </location>
</feature>
<feature type="transmembrane region" description="Helical" evidence="1">
    <location>
        <begin position="43"/>
        <end position="63"/>
    </location>
</feature>
<feature type="transmembrane region" description="Helical" evidence="1">
    <location>
        <begin position="83"/>
        <end position="103"/>
    </location>
</feature>
<feature type="transmembrane region" description="Helical" evidence="1">
    <location>
        <begin position="143"/>
        <end position="163"/>
    </location>
</feature>
<feature type="transmembrane region" description="Helical" evidence="1">
    <location>
        <begin position="181"/>
        <end position="201"/>
    </location>
</feature>
<feature type="transmembrane region" description="Helical" evidence="1">
    <location>
        <begin position="219"/>
        <end position="239"/>
    </location>
</feature>
<feature type="transmembrane region" description="Helical" evidence="1">
    <location>
        <begin position="247"/>
        <end position="269"/>
    </location>
</feature>
<feature type="transmembrane region" description="Helical" evidence="1">
    <location>
        <begin position="290"/>
        <end position="310"/>
    </location>
</feature>
<feature type="transmembrane region" description="Helical" evidence="1">
    <location>
        <begin position="332"/>
        <end position="352"/>
    </location>
</feature>
<keyword id="KW-0029">Amino-acid transport</keyword>
<keyword id="KW-0997">Cell inner membrane</keyword>
<keyword id="KW-1003">Cell membrane</keyword>
<keyword id="KW-0472">Membrane</keyword>
<keyword id="KW-1185">Reference proteome</keyword>
<keyword id="KW-0769">Symport</keyword>
<keyword id="KW-0812">Transmembrane</keyword>
<keyword id="KW-1133">Transmembrane helix</keyword>
<keyword id="KW-0813">Transport</keyword>
<comment type="function">
    <text evidence="1">Involved in the import of serine and threonine into the cell, with the concomitant import of sodium (symport system).</text>
</comment>
<comment type="catalytic activity">
    <reaction evidence="1">
        <text>L-serine(in) + Na(+)(in) = L-serine(out) + Na(+)(out)</text>
        <dbReference type="Rhea" id="RHEA:29575"/>
        <dbReference type="ChEBI" id="CHEBI:29101"/>
        <dbReference type="ChEBI" id="CHEBI:33384"/>
    </reaction>
    <physiologicalReaction direction="right-to-left" evidence="1">
        <dbReference type="Rhea" id="RHEA:29577"/>
    </physiologicalReaction>
</comment>
<comment type="catalytic activity">
    <reaction evidence="1">
        <text>L-threonine(in) + Na(+)(in) = L-threonine(out) + Na(+)(out)</text>
        <dbReference type="Rhea" id="RHEA:69999"/>
        <dbReference type="ChEBI" id="CHEBI:29101"/>
        <dbReference type="ChEBI" id="CHEBI:57926"/>
    </reaction>
    <physiologicalReaction direction="right-to-left" evidence="1">
        <dbReference type="Rhea" id="RHEA:70001"/>
    </physiologicalReaction>
</comment>
<comment type="subcellular location">
    <subcellularLocation>
        <location evidence="1">Cell inner membrane</location>
        <topology evidence="1">Multi-pass membrane protein</topology>
    </subcellularLocation>
</comment>
<comment type="similarity">
    <text evidence="1">Belongs to the dicarboxylate/amino acid:cation symporter (DAACS) (TC 2.A.23) family.</text>
</comment>
<accession>B9KCT5</accession>
<sequence length="408" mass="43433">MSLFSCAIKRYKEGNLILQICIGIVLGILIGIFSKDLAIFANIFGALFTGALKAIAPILVFILILTTICTKEFNHGSEKIKHIIFLYIFGTFLASLSAVSISFIFPVELVLTDIEKASTTSPAHIGEVFKTLLFQIVDNPIHALSSGNYLSILAWAIGGGFALRHCSNDAKQLFTDINEGVLKIVKFIVKLAPFGIFGLVANSVAQTGAAGLLSYIKLLIILVLTMFFVAFVINALIVFAYTKKNPYPLIFICLKHSAVFAFFTRSSAANIPVNMALCSKLNINNSLYSISIPLGATINMAGAAVTIAILSLAAAHTVGIEINFLQAMLLSVLAAFAACGASGVAGGSLLLIPLACSLFNIDYDIAMQVVAVGFIIGVIQDSVETALNSSTDVLFSAICSDNELNLKI</sequence>
<reference key="1">
    <citation type="journal article" date="2008" name="Foodborne Pathog. Dis.">
        <title>The complete genome sequence and analysis of the human pathogen Campylobacter lari.</title>
        <authorList>
            <person name="Miller W.G."/>
            <person name="Wang G."/>
            <person name="Binnewies T.T."/>
            <person name="Parker C.T."/>
        </authorList>
    </citation>
    <scope>NUCLEOTIDE SEQUENCE [LARGE SCALE GENOMIC DNA]</scope>
    <source>
        <strain>RM2100 / D67 / ATCC BAA-1060</strain>
    </source>
</reference>
<name>SSTT_CAMLR</name>
<protein>
    <recommendedName>
        <fullName evidence="1">Serine/threonine transporter SstT</fullName>
    </recommendedName>
    <alternativeName>
        <fullName evidence="1">Na(+)/serine-threonine symporter</fullName>
    </alternativeName>
</protein>